<proteinExistence type="inferred from homology"/>
<organism>
    <name type="scientific">Salmonella schwarzengrund (strain CVM19633)</name>
    <dbReference type="NCBI Taxonomy" id="439843"/>
    <lineage>
        <taxon>Bacteria</taxon>
        <taxon>Pseudomonadati</taxon>
        <taxon>Pseudomonadota</taxon>
        <taxon>Gammaproteobacteria</taxon>
        <taxon>Enterobacterales</taxon>
        <taxon>Enterobacteriaceae</taxon>
        <taxon>Salmonella</taxon>
    </lineage>
</organism>
<protein>
    <recommendedName>
        <fullName evidence="1">Glycine--tRNA ligase alpha subunit</fullName>
        <ecNumber evidence="1">6.1.1.14</ecNumber>
    </recommendedName>
    <alternativeName>
        <fullName evidence="1">Glycyl-tRNA synthetase alpha subunit</fullName>
        <shortName evidence="1">GlyRS</shortName>
    </alternativeName>
</protein>
<reference key="1">
    <citation type="journal article" date="2011" name="J. Bacteriol.">
        <title>Comparative genomics of 28 Salmonella enterica isolates: evidence for CRISPR-mediated adaptive sublineage evolution.</title>
        <authorList>
            <person name="Fricke W.F."/>
            <person name="Mammel M.K."/>
            <person name="McDermott P.F."/>
            <person name="Tartera C."/>
            <person name="White D.G."/>
            <person name="Leclerc J.E."/>
            <person name="Ravel J."/>
            <person name="Cebula T.A."/>
        </authorList>
    </citation>
    <scope>NUCLEOTIDE SEQUENCE [LARGE SCALE GENOMIC DNA]</scope>
    <source>
        <strain>CVM19633</strain>
    </source>
</reference>
<feature type="chain" id="PRO_1000101230" description="Glycine--tRNA ligase alpha subunit">
    <location>
        <begin position="1"/>
        <end position="303"/>
    </location>
</feature>
<name>SYGA_SALSV</name>
<sequence>MQKFDTRTFQGLILTLQDYWARQGCTIVQPLDMEVGAGTSHPMTCLRALGPEPMATAYVQPSRRPTDGRYGENPNRLQHYYQFQVVIKPSPENIQELYLGSLKELGMDPTIHDIRFVEDNWENPTLGAWGLGWEVWLNGMEVTQFTYFQQVGGLECKPVTGEITYGLERLAMYIQGVDSVYDLVWSDGPLGKTTYGDVFHQNEVEQSTYNFEYADVDFLFTCFEQYEKEAQQLLALENPLPLPAYERILKAAHSFNLLDARKAISVTERQRYILRIRTLTKAVAEAYYASREALGFPMCNKDK</sequence>
<evidence type="ECO:0000255" key="1">
    <source>
        <dbReference type="HAMAP-Rule" id="MF_00254"/>
    </source>
</evidence>
<keyword id="KW-0030">Aminoacyl-tRNA synthetase</keyword>
<keyword id="KW-0067">ATP-binding</keyword>
<keyword id="KW-0963">Cytoplasm</keyword>
<keyword id="KW-0436">Ligase</keyword>
<keyword id="KW-0547">Nucleotide-binding</keyword>
<keyword id="KW-0648">Protein biosynthesis</keyword>
<comment type="catalytic activity">
    <reaction evidence="1">
        <text>tRNA(Gly) + glycine + ATP = glycyl-tRNA(Gly) + AMP + diphosphate</text>
        <dbReference type="Rhea" id="RHEA:16013"/>
        <dbReference type="Rhea" id="RHEA-COMP:9664"/>
        <dbReference type="Rhea" id="RHEA-COMP:9683"/>
        <dbReference type="ChEBI" id="CHEBI:30616"/>
        <dbReference type="ChEBI" id="CHEBI:33019"/>
        <dbReference type="ChEBI" id="CHEBI:57305"/>
        <dbReference type="ChEBI" id="CHEBI:78442"/>
        <dbReference type="ChEBI" id="CHEBI:78522"/>
        <dbReference type="ChEBI" id="CHEBI:456215"/>
        <dbReference type="EC" id="6.1.1.14"/>
    </reaction>
</comment>
<comment type="subunit">
    <text evidence="1">Tetramer of two alpha and two beta subunits.</text>
</comment>
<comment type="subcellular location">
    <subcellularLocation>
        <location evidence="1">Cytoplasm</location>
    </subcellularLocation>
</comment>
<comment type="similarity">
    <text evidence="1">Belongs to the class-II aminoacyl-tRNA synthetase family.</text>
</comment>
<dbReference type="EC" id="6.1.1.14" evidence="1"/>
<dbReference type="EMBL" id="CP001127">
    <property type="protein sequence ID" value="ACF91916.1"/>
    <property type="molecule type" value="Genomic_DNA"/>
</dbReference>
<dbReference type="RefSeq" id="WP_001168556.1">
    <property type="nucleotide sequence ID" value="NC_011094.1"/>
</dbReference>
<dbReference type="SMR" id="B4TZ50"/>
<dbReference type="KEGG" id="sew:SeSA_A3850"/>
<dbReference type="HOGENOM" id="CLU_057066_1_0_6"/>
<dbReference type="Proteomes" id="UP000001865">
    <property type="component" value="Chromosome"/>
</dbReference>
<dbReference type="GO" id="GO:0005829">
    <property type="term" value="C:cytosol"/>
    <property type="evidence" value="ECO:0007669"/>
    <property type="project" value="TreeGrafter"/>
</dbReference>
<dbReference type="GO" id="GO:0005524">
    <property type="term" value="F:ATP binding"/>
    <property type="evidence" value="ECO:0007669"/>
    <property type="project" value="UniProtKB-UniRule"/>
</dbReference>
<dbReference type="GO" id="GO:0004820">
    <property type="term" value="F:glycine-tRNA ligase activity"/>
    <property type="evidence" value="ECO:0007669"/>
    <property type="project" value="UniProtKB-UniRule"/>
</dbReference>
<dbReference type="GO" id="GO:0006426">
    <property type="term" value="P:glycyl-tRNA aminoacylation"/>
    <property type="evidence" value="ECO:0007669"/>
    <property type="project" value="UniProtKB-UniRule"/>
</dbReference>
<dbReference type="CDD" id="cd00733">
    <property type="entry name" value="GlyRS_alpha_core"/>
    <property type="match status" value="1"/>
</dbReference>
<dbReference type="FunFam" id="1.20.58.180:FF:000001">
    <property type="entry name" value="Glycine--tRNA ligase alpha subunit"/>
    <property type="match status" value="1"/>
</dbReference>
<dbReference type="FunFam" id="3.30.930.10:FF:000006">
    <property type="entry name" value="Glycine--tRNA ligase alpha subunit"/>
    <property type="match status" value="1"/>
</dbReference>
<dbReference type="Gene3D" id="3.30.930.10">
    <property type="entry name" value="Bira Bifunctional Protein, Domain 2"/>
    <property type="match status" value="1"/>
</dbReference>
<dbReference type="Gene3D" id="1.20.58.180">
    <property type="entry name" value="Class II aaRS and biotin synthetases, domain 2"/>
    <property type="match status" value="1"/>
</dbReference>
<dbReference type="HAMAP" id="MF_00254">
    <property type="entry name" value="Gly_tRNA_synth_alpha"/>
    <property type="match status" value="1"/>
</dbReference>
<dbReference type="InterPro" id="IPR045864">
    <property type="entry name" value="aa-tRNA-synth_II/BPL/LPL"/>
</dbReference>
<dbReference type="InterPro" id="IPR006194">
    <property type="entry name" value="Gly-tRNA-synth_heterodimer"/>
</dbReference>
<dbReference type="InterPro" id="IPR002310">
    <property type="entry name" value="Gly-tRNA_ligase_asu"/>
</dbReference>
<dbReference type="NCBIfam" id="TIGR00388">
    <property type="entry name" value="glyQ"/>
    <property type="match status" value="1"/>
</dbReference>
<dbReference type="NCBIfam" id="NF006827">
    <property type="entry name" value="PRK09348.1"/>
    <property type="match status" value="1"/>
</dbReference>
<dbReference type="PANTHER" id="PTHR30075:SF2">
    <property type="entry name" value="GLYCINE--TRNA LIGASE, CHLOROPLASTIC_MITOCHONDRIAL 2"/>
    <property type="match status" value="1"/>
</dbReference>
<dbReference type="PANTHER" id="PTHR30075">
    <property type="entry name" value="GLYCYL-TRNA SYNTHETASE"/>
    <property type="match status" value="1"/>
</dbReference>
<dbReference type="Pfam" id="PF02091">
    <property type="entry name" value="tRNA-synt_2e"/>
    <property type="match status" value="1"/>
</dbReference>
<dbReference type="PRINTS" id="PR01044">
    <property type="entry name" value="TRNASYNTHGA"/>
</dbReference>
<dbReference type="SUPFAM" id="SSF55681">
    <property type="entry name" value="Class II aaRS and biotin synthetases"/>
    <property type="match status" value="1"/>
</dbReference>
<dbReference type="PROSITE" id="PS50861">
    <property type="entry name" value="AA_TRNA_LIGASE_II_GLYAB"/>
    <property type="match status" value="1"/>
</dbReference>
<gene>
    <name evidence="1" type="primary">glyQ</name>
    <name type="ordered locus">SeSA_A3850</name>
</gene>
<accession>B4TZ50</accession>